<feature type="chain" id="PRO_1000045974" description="1-pyrroline-5-carboxylate dehydrogenase">
    <location>
        <begin position="1"/>
        <end position="514"/>
    </location>
</feature>
<feature type="active site" evidence="1">
    <location>
        <position position="286"/>
    </location>
</feature>
<feature type="active site" evidence="1">
    <location>
        <position position="320"/>
    </location>
</feature>
<sequence length="514" mass="56868">MVVEFKNEPGYDFSVQENVDMFKKALKDVEKELGQDIPLVINGEKIFKDDKIKSINPADTSQVIANASKATKQDVEDAFKAANEAYKSWKTWSANDRAELMLRVSAIIRRRKAEIAAIMVYEAGKPWDEAVGDAAEGIDFIEYYARSMMDLAQGKPVLDREGEHNKYFYKSIGTGVTIPPWNFPFAIMAGTTLAPVVAGNTVLLKPAEDTPYIAYKLMEILEEAGLPKGVVNFVPGDPKEIGDYLVDHKDTHFVTFTGSRATGTRIYERSAVVQEGQNFLKRVIAEMGGKDAIVVDENIDTDMAAEAIVTSAFGFSGQKCSACSRAIVHKDVYDEVLEKSIKLTKELTLGNTVDNTYMGPVINKKQFDKIKNYIEIGKEEGKLEQGGGTDDSKGYFVEPTIISGLKSKDRIMQEEIFGPVVGFVKVNDFDEAIEVANDTDYGLTGAVITNNREHWIKAVNEFDVGNLYLNRGCTSAVVGYHPFGGFKMSGTDAKTGSPDYLLHFLEQKVVSEMF</sequence>
<gene>
    <name evidence="1" type="primary">rocA</name>
    <name type="ordered locus">SAOUHSC_02869</name>
</gene>
<accession>Q2FV67</accession>
<proteinExistence type="inferred from homology"/>
<name>ROCA_STAA8</name>
<reference key="1">
    <citation type="book" date="2006" name="Gram positive pathogens, 2nd edition">
        <title>The Staphylococcus aureus NCTC 8325 genome.</title>
        <editorList>
            <person name="Fischetti V."/>
            <person name="Novick R."/>
            <person name="Ferretti J."/>
            <person name="Portnoy D."/>
            <person name="Rood J."/>
        </editorList>
        <authorList>
            <person name="Gillaspy A.F."/>
            <person name="Worrell V."/>
            <person name="Orvis J."/>
            <person name="Roe B.A."/>
            <person name="Dyer D.W."/>
            <person name="Iandolo J.J."/>
        </authorList>
    </citation>
    <scope>NUCLEOTIDE SEQUENCE [LARGE SCALE GENOMIC DNA]</scope>
    <source>
        <strain>NCTC 8325 / PS 47</strain>
    </source>
</reference>
<dbReference type="EC" id="1.2.1.88" evidence="1"/>
<dbReference type="EMBL" id="CP000253">
    <property type="protein sequence ID" value="ABD31868.1"/>
    <property type="molecule type" value="Genomic_DNA"/>
</dbReference>
<dbReference type="RefSeq" id="YP_501325.1">
    <property type="nucleotide sequence ID" value="NC_007795.1"/>
</dbReference>
<dbReference type="SMR" id="Q2FV67"/>
<dbReference type="STRING" id="93061.SAOUHSC_02869"/>
<dbReference type="PaxDb" id="1280-SAXN108_2805"/>
<dbReference type="GeneID" id="3921541"/>
<dbReference type="KEGG" id="sao:SAOUHSC_02869"/>
<dbReference type="PATRIC" id="fig|93061.5.peg.2594"/>
<dbReference type="eggNOG" id="COG1012">
    <property type="taxonomic scope" value="Bacteria"/>
</dbReference>
<dbReference type="HOGENOM" id="CLU_005391_0_0_9"/>
<dbReference type="OrthoDB" id="9762913at2"/>
<dbReference type="UniPathway" id="UPA00261">
    <property type="reaction ID" value="UER00374"/>
</dbReference>
<dbReference type="PRO" id="PR:Q2FV67"/>
<dbReference type="Proteomes" id="UP000008816">
    <property type="component" value="Chromosome"/>
</dbReference>
<dbReference type="GO" id="GO:0009898">
    <property type="term" value="C:cytoplasmic side of plasma membrane"/>
    <property type="evidence" value="ECO:0000318"/>
    <property type="project" value="GO_Central"/>
</dbReference>
<dbReference type="GO" id="GO:0003842">
    <property type="term" value="F:1-pyrroline-5-carboxylate dehydrogenase activity"/>
    <property type="evidence" value="ECO:0000318"/>
    <property type="project" value="GO_Central"/>
</dbReference>
<dbReference type="GO" id="GO:0006537">
    <property type="term" value="P:glutamate biosynthetic process"/>
    <property type="evidence" value="ECO:0007669"/>
    <property type="project" value="UniProtKB-UniRule"/>
</dbReference>
<dbReference type="GO" id="GO:0010133">
    <property type="term" value="P:proline catabolic process to glutamate"/>
    <property type="evidence" value="ECO:0000318"/>
    <property type="project" value="GO_Central"/>
</dbReference>
<dbReference type="CDD" id="cd07124">
    <property type="entry name" value="ALDH_PutA-P5CDH-RocA"/>
    <property type="match status" value="1"/>
</dbReference>
<dbReference type="FunFam" id="3.40.309.10:FF:000005">
    <property type="entry name" value="1-pyrroline-5-carboxylate dehydrogenase 1"/>
    <property type="match status" value="1"/>
</dbReference>
<dbReference type="FunFam" id="3.40.605.10:FF:000045">
    <property type="entry name" value="1-pyrroline-5-carboxylate dehydrogenase 1"/>
    <property type="match status" value="1"/>
</dbReference>
<dbReference type="Gene3D" id="3.40.605.10">
    <property type="entry name" value="Aldehyde Dehydrogenase, Chain A, domain 1"/>
    <property type="match status" value="1"/>
</dbReference>
<dbReference type="Gene3D" id="3.40.309.10">
    <property type="entry name" value="Aldehyde Dehydrogenase, Chain A, domain 2"/>
    <property type="match status" value="1"/>
</dbReference>
<dbReference type="HAMAP" id="MF_00733">
    <property type="entry name" value="RocA"/>
    <property type="match status" value="1"/>
</dbReference>
<dbReference type="InterPro" id="IPR016161">
    <property type="entry name" value="Ald_DH/histidinol_DH"/>
</dbReference>
<dbReference type="InterPro" id="IPR016163">
    <property type="entry name" value="Ald_DH_C"/>
</dbReference>
<dbReference type="InterPro" id="IPR016160">
    <property type="entry name" value="Ald_DH_CS_CYS"/>
</dbReference>
<dbReference type="InterPro" id="IPR029510">
    <property type="entry name" value="Ald_DH_CS_GLU"/>
</dbReference>
<dbReference type="InterPro" id="IPR016162">
    <property type="entry name" value="Ald_DH_N"/>
</dbReference>
<dbReference type="InterPro" id="IPR015590">
    <property type="entry name" value="Aldehyde_DH_dom"/>
</dbReference>
<dbReference type="InterPro" id="IPR050485">
    <property type="entry name" value="Proline_metab_enzyme"/>
</dbReference>
<dbReference type="InterPro" id="IPR005932">
    <property type="entry name" value="RocA"/>
</dbReference>
<dbReference type="InterPro" id="IPR047597">
    <property type="entry name" value="RocA_bacillales"/>
</dbReference>
<dbReference type="NCBIfam" id="TIGR01237">
    <property type="entry name" value="D1pyr5carbox2"/>
    <property type="match status" value="1"/>
</dbReference>
<dbReference type="NCBIfam" id="NF002852">
    <property type="entry name" value="PRK03137.1"/>
    <property type="match status" value="1"/>
</dbReference>
<dbReference type="PANTHER" id="PTHR42862">
    <property type="entry name" value="DELTA-1-PYRROLINE-5-CARBOXYLATE DEHYDROGENASE 1, ISOFORM A-RELATED"/>
    <property type="match status" value="1"/>
</dbReference>
<dbReference type="PANTHER" id="PTHR42862:SF1">
    <property type="entry name" value="DELTA-1-PYRROLINE-5-CARBOXYLATE DEHYDROGENASE 2, ISOFORM A-RELATED"/>
    <property type="match status" value="1"/>
</dbReference>
<dbReference type="Pfam" id="PF00171">
    <property type="entry name" value="Aldedh"/>
    <property type="match status" value="1"/>
</dbReference>
<dbReference type="SUPFAM" id="SSF53720">
    <property type="entry name" value="ALDH-like"/>
    <property type="match status" value="1"/>
</dbReference>
<dbReference type="PROSITE" id="PS00070">
    <property type="entry name" value="ALDEHYDE_DEHYDR_CYS"/>
    <property type="match status" value="1"/>
</dbReference>
<dbReference type="PROSITE" id="PS00687">
    <property type="entry name" value="ALDEHYDE_DEHYDR_GLU"/>
    <property type="match status" value="1"/>
</dbReference>
<protein>
    <recommendedName>
        <fullName evidence="1">1-pyrroline-5-carboxylate dehydrogenase</fullName>
        <shortName evidence="1">P5C dehydrogenase</shortName>
        <ecNumber evidence="1">1.2.1.88</ecNumber>
    </recommendedName>
    <alternativeName>
        <fullName evidence="1">L-glutamate gamma-semialdehyde dehydrogenase</fullName>
    </alternativeName>
</protein>
<organism>
    <name type="scientific">Staphylococcus aureus (strain NCTC 8325 / PS 47)</name>
    <dbReference type="NCBI Taxonomy" id="93061"/>
    <lineage>
        <taxon>Bacteria</taxon>
        <taxon>Bacillati</taxon>
        <taxon>Bacillota</taxon>
        <taxon>Bacilli</taxon>
        <taxon>Bacillales</taxon>
        <taxon>Staphylococcaceae</taxon>
        <taxon>Staphylococcus</taxon>
    </lineage>
</organism>
<evidence type="ECO:0000255" key="1">
    <source>
        <dbReference type="HAMAP-Rule" id="MF_00733"/>
    </source>
</evidence>
<keyword id="KW-0520">NAD</keyword>
<keyword id="KW-0560">Oxidoreductase</keyword>
<keyword id="KW-1185">Reference proteome</keyword>
<comment type="catalytic activity">
    <reaction evidence="1">
        <text>L-glutamate 5-semialdehyde + NAD(+) + H2O = L-glutamate + NADH + 2 H(+)</text>
        <dbReference type="Rhea" id="RHEA:30235"/>
        <dbReference type="ChEBI" id="CHEBI:15377"/>
        <dbReference type="ChEBI" id="CHEBI:15378"/>
        <dbReference type="ChEBI" id="CHEBI:29985"/>
        <dbReference type="ChEBI" id="CHEBI:57540"/>
        <dbReference type="ChEBI" id="CHEBI:57945"/>
        <dbReference type="ChEBI" id="CHEBI:58066"/>
        <dbReference type="EC" id="1.2.1.88"/>
    </reaction>
</comment>
<comment type="pathway">
    <text evidence="1">Amino-acid degradation; L-proline degradation into L-glutamate; L-glutamate from L-proline: step 2/2.</text>
</comment>
<comment type="similarity">
    <text evidence="1">Belongs to the aldehyde dehydrogenase family. RocA subfamily.</text>
</comment>